<gene>
    <name evidence="3" type="primary">UGT85C1</name>
</gene>
<protein>
    <recommendedName>
        <fullName evidence="3">UDP-glycosyltransferase 85C1</fullName>
        <ecNumber evidence="4">2.4.1.-</ecNumber>
    </recommendedName>
</protein>
<organism>
    <name type="scientific">Stevia rebaudiana</name>
    <name type="common">Stevia</name>
    <name type="synonym">Eupatorium rebaudianum</name>
    <dbReference type="NCBI Taxonomy" id="55670"/>
    <lineage>
        <taxon>Eukaryota</taxon>
        <taxon>Viridiplantae</taxon>
        <taxon>Streptophyta</taxon>
        <taxon>Embryophyta</taxon>
        <taxon>Tracheophyta</taxon>
        <taxon>Spermatophyta</taxon>
        <taxon>Magnoliopsida</taxon>
        <taxon>eudicotyledons</taxon>
        <taxon>Gunneridae</taxon>
        <taxon>Pentapetalae</taxon>
        <taxon>asterids</taxon>
        <taxon>campanulids</taxon>
        <taxon>Asterales</taxon>
        <taxon>Asteraceae</taxon>
        <taxon>Asteroideae</taxon>
        <taxon>Heliantheae alliance</taxon>
        <taxon>Eupatorieae</taxon>
        <taxon>Stevia</taxon>
    </lineage>
</organism>
<feature type="chain" id="PRO_0000434469" description="UDP-glycosyltransferase 85C1">
    <location>
        <begin position="1"/>
        <end position="483"/>
    </location>
</feature>
<feature type="binding site" evidence="2">
    <location>
        <position position="304"/>
    </location>
    <ligand>
        <name>UDP-alpha-D-glucose</name>
        <dbReference type="ChEBI" id="CHEBI:58885"/>
    </ligand>
</feature>
<feature type="binding site" evidence="2">
    <location>
        <begin position="360"/>
        <end position="361"/>
    </location>
    <ligand>
        <name>UDP-alpha-D-glucose</name>
        <dbReference type="ChEBI" id="CHEBI:58885"/>
    </ligand>
</feature>
<feature type="binding site" evidence="2">
    <location>
        <begin position="378"/>
        <end position="386"/>
    </location>
    <ligand>
        <name>UDP-alpha-D-glucose</name>
        <dbReference type="ChEBI" id="CHEBI:58885"/>
    </ligand>
</feature>
<feature type="binding site" evidence="2">
    <location>
        <begin position="400"/>
        <end position="403"/>
    </location>
    <ligand>
        <name>UDP-alpha-D-glucose</name>
        <dbReference type="ChEBI" id="CHEBI:58885"/>
    </ligand>
</feature>
<keyword id="KW-0328">Glycosyltransferase</keyword>
<keyword id="KW-0808">Transferase</keyword>
<sequence length="483" mass="54898">MDQMAKIDEKKPHVVFIPFPAQSHIKCMLKLARILHQKGLYITFINTDTNHERLVASGGTQWLENAPGFWFKTVPDGFGSAKDDGVKPTDALRELMDYLKTNFFDLFLDLVLKLEVPATCIICDGCMTFANTIRAAEKLNIPVILFWTMAACGFMAFYQAKVLKEKEIVPVKDETYLTNGYLDMEIDWIPGMKRIRLRDLPEFILATKQNYFAFEFLFETAQLADKVSHMIIHTFEELEASLVSEIKSIFPNVYTIGPLQLLLNKITQKETNNDSYSLWKEEPECVEWLNSKEPNSVVYVNFGSLAVMSLQDLVEFGWGLVNSNHYFLWIIRANLIDGKPAVMPQELKEAMNEKGFVGSWCSQEEVLNHPAVGGFLTHCGWGSIIESLSAGVPMLGWPSIGDQRANCRQMCKEWEVGMEIGKNVKRDEVEKLVRMLMEGLEGERMRKKALEWKKSATLATCCNGSSSLDVEKLANEIKKLSRN</sequence>
<accession>Q6VAA4</accession>
<evidence type="ECO:0000250" key="1">
    <source>
        <dbReference type="UniProtKB" id="Q6VAA6"/>
    </source>
</evidence>
<evidence type="ECO:0000250" key="2">
    <source>
        <dbReference type="UniProtKB" id="Q9M156"/>
    </source>
</evidence>
<evidence type="ECO:0000303" key="3">
    <source>
    </source>
</evidence>
<evidence type="ECO:0000305" key="4"/>
<proteinExistence type="evidence at transcript level"/>
<name>U85C1_STERE</name>
<dbReference type="EC" id="2.4.1.-" evidence="4"/>
<dbReference type="EMBL" id="AY345984">
    <property type="protein sequence ID" value="AAR06922.1"/>
    <property type="molecule type" value="mRNA"/>
</dbReference>
<dbReference type="SMR" id="Q6VAA4"/>
<dbReference type="CAZy" id="GT1">
    <property type="family name" value="Glycosyltransferase Family 1"/>
</dbReference>
<dbReference type="GO" id="GO:0080043">
    <property type="term" value="F:quercetin 3-O-glucosyltransferase activity"/>
    <property type="evidence" value="ECO:0007669"/>
    <property type="project" value="TreeGrafter"/>
</dbReference>
<dbReference type="GO" id="GO:0080044">
    <property type="term" value="F:quercetin 7-O-glucosyltransferase activity"/>
    <property type="evidence" value="ECO:0007669"/>
    <property type="project" value="TreeGrafter"/>
</dbReference>
<dbReference type="CDD" id="cd03784">
    <property type="entry name" value="GT1_Gtf-like"/>
    <property type="match status" value="1"/>
</dbReference>
<dbReference type="FunFam" id="3.40.50.2000:FF:000056">
    <property type="entry name" value="Glycosyltransferase"/>
    <property type="match status" value="1"/>
</dbReference>
<dbReference type="FunFam" id="3.40.50.2000:FF:000065">
    <property type="entry name" value="Glycosyltransferase"/>
    <property type="match status" value="1"/>
</dbReference>
<dbReference type="Gene3D" id="3.40.50.2000">
    <property type="entry name" value="Glycogen Phosphorylase B"/>
    <property type="match status" value="2"/>
</dbReference>
<dbReference type="InterPro" id="IPR002213">
    <property type="entry name" value="UDP_glucos_trans"/>
</dbReference>
<dbReference type="InterPro" id="IPR035595">
    <property type="entry name" value="UDP_glycos_trans_CS"/>
</dbReference>
<dbReference type="PANTHER" id="PTHR11926">
    <property type="entry name" value="GLUCOSYL/GLUCURONOSYL TRANSFERASES"/>
    <property type="match status" value="1"/>
</dbReference>
<dbReference type="PANTHER" id="PTHR11926:SF1503">
    <property type="entry name" value="GLYCOSYLTRANSFERASE"/>
    <property type="match status" value="1"/>
</dbReference>
<dbReference type="Pfam" id="PF00201">
    <property type="entry name" value="UDPGT"/>
    <property type="match status" value="1"/>
</dbReference>
<dbReference type="SUPFAM" id="SSF53756">
    <property type="entry name" value="UDP-Glycosyltransferase/glycogen phosphorylase"/>
    <property type="match status" value="1"/>
</dbReference>
<dbReference type="PROSITE" id="PS00375">
    <property type="entry name" value="UDPGT"/>
    <property type="match status" value="1"/>
</dbReference>
<comment type="function">
    <text evidence="1">May glycosylate diterpenes or flavonols in leaves.</text>
</comment>
<comment type="similarity">
    <text evidence="4">Belongs to the UDP-glycosyltransferase family.</text>
</comment>
<reference key="1">
    <citation type="journal article" date="2005" name="Plant J.">
        <title>Functional genomics uncovers three glucosyltransferases involved in the synthesis of the major sweet glucosides of Stevia rebaudiana.</title>
        <authorList>
            <person name="Richman A."/>
            <person name="Swanson A."/>
            <person name="Humphrey T."/>
            <person name="Chapman R."/>
            <person name="McGarvey B."/>
            <person name="Pocs R."/>
            <person name="Brandle J."/>
        </authorList>
    </citation>
    <scope>NUCLEOTIDE SEQUENCE [MRNA]</scope>
    <source>
        <tissue>Leaf</tissue>
    </source>
</reference>